<protein>
    <recommendedName>
        <fullName evidence="1">Cytochrome b6-f complex subunit 5</fullName>
    </recommendedName>
    <alternativeName>
        <fullName evidence="1">Cytochrome b6-f complex subunit PetG</fullName>
    </alternativeName>
    <alternativeName>
        <fullName evidence="1">Cytochrome b6-f complex subunit V</fullName>
    </alternativeName>
</protein>
<feature type="chain" id="PRO_0000275483" description="Cytochrome b6-f complex subunit 5">
    <location>
        <begin position="1"/>
        <end position="37"/>
    </location>
</feature>
<feature type="transmembrane region" description="Helical" evidence="1">
    <location>
        <begin position="5"/>
        <end position="25"/>
    </location>
</feature>
<name>PETG_CITSI</name>
<keyword id="KW-0150">Chloroplast</keyword>
<keyword id="KW-0249">Electron transport</keyword>
<keyword id="KW-0472">Membrane</keyword>
<keyword id="KW-0602">Photosynthesis</keyword>
<keyword id="KW-0934">Plastid</keyword>
<keyword id="KW-0793">Thylakoid</keyword>
<keyword id="KW-0812">Transmembrane</keyword>
<keyword id="KW-1133">Transmembrane helix</keyword>
<keyword id="KW-0813">Transport</keyword>
<sequence>MIEVFLFGIVLGLIPITLAGLFVTAYLQYRRGDQLDL</sequence>
<reference key="1">
    <citation type="journal article" date="2006" name="BMC Plant Biol.">
        <title>The complete chloroplast genome sequence of Citrus sinensis (L.) Osbeck var 'Ridge Pineapple': organization and phylogenetic relationships to other angiosperms.</title>
        <authorList>
            <person name="Bausher M.G."/>
            <person name="Singh N.D."/>
            <person name="Lee S.-B."/>
            <person name="Jansen R.K."/>
            <person name="Daniell H."/>
        </authorList>
    </citation>
    <scope>NUCLEOTIDE SEQUENCE [LARGE SCALE GENOMIC DNA]</scope>
    <source>
        <strain>cv. Osbeck var. Ridge Pineapple</strain>
    </source>
</reference>
<gene>
    <name evidence="1" type="primary">petG</name>
</gene>
<dbReference type="EMBL" id="DQ864733">
    <property type="protein sequence ID" value="ABI49039.1"/>
    <property type="molecule type" value="Genomic_DNA"/>
</dbReference>
<dbReference type="RefSeq" id="YP_740494.1">
    <property type="nucleotide sequence ID" value="NC_008334.1"/>
</dbReference>
<dbReference type="SMR" id="Q09MF9"/>
<dbReference type="GeneID" id="4271117"/>
<dbReference type="KEGG" id="cit:4271117"/>
<dbReference type="OrthoDB" id="11092at71240"/>
<dbReference type="GO" id="GO:0009535">
    <property type="term" value="C:chloroplast thylakoid membrane"/>
    <property type="evidence" value="ECO:0007669"/>
    <property type="project" value="UniProtKB-SubCell"/>
</dbReference>
<dbReference type="GO" id="GO:0009512">
    <property type="term" value="C:cytochrome b6f complex"/>
    <property type="evidence" value="ECO:0007669"/>
    <property type="project" value="InterPro"/>
</dbReference>
<dbReference type="GO" id="GO:0045158">
    <property type="term" value="F:electron transporter, transferring electrons within cytochrome b6/f complex of photosystem II activity"/>
    <property type="evidence" value="ECO:0007669"/>
    <property type="project" value="UniProtKB-UniRule"/>
</dbReference>
<dbReference type="GO" id="GO:0017004">
    <property type="term" value="P:cytochrome complex assembly"/>
    <property type="evidence" value="ECO:0007669"/>
    <property type="project" value="UniProtKB-UniRule"/>
</dbReference>
<dbReference type="GO" id="GO:0015979">
    <property type="term" value="P:photosynthesis"/>
    <property type="evidence" value="ECO:0007669"/>
    <property type="project" value="UniProtKB-KW"/>
</dbReference>
<dbReference type="HAMAP" id="MF_00432">
    <property type="entry name" value="Cytb6_f_PetG"/>
    <property type="match status" value="1"/>
</dbReference>
<dbReference type="InterPro" id="IPR003683">
    <property type="entry name" value="Cyt_6/f_cplx_su5"/>
</dbReference>
<dbReference type="InterPro" id="IPR036099">
    <property type="entry name" value="Cyt_6/f_cplx_su5_sf"/>
</dbReference>
<dbReference type="NCBIfam" id="NF001907">
    <property type="entry name" value="PRK00665.1"/>
    <property type="match status" value="1"/>
</dbReference>
<dbReference type="Pfam" id="PF02529">
    <property type="entry name" value="PetG"/>
    <property type="match status" value="1"/>
</dbReference>
<dbReference type="PIRSF" id="PIRSF000034">
    <property type="entry name" value="Cyt_b6-f_V"/>
    <property type="match status" value="1"/>
</dbReference>
<dbReference type="SUPFAM" id="SSF103446">
    <property type="entry name" value="PetG subunit of the cytochrome b6f complex"/>
    <property type="match status" value="1"/>
</dbReference>
<accession>Q09MF9</accession>
<organism>
    <name type="scientific">Citrus sinensis</name>
    <name type="common">Sweet orange</name>
    <name type="synonym">Citrus aurantium var. sinensis</name>
    <dbReference type="NCBI Taxonomy" id="2711"/>
    <lineage>
        <taxon>Eukaryota</taxon>
        <taxon>Viridiplantae</taxon>
        <taxon>Streptophyta</taxon>
        <taxon>Embryophyta</taxon>
        <taxon>Tracheophyta</taxon>
        <taxon>Spermatophyta</taxon>
        <taxon>Magnoliopsida</taxon>
        <taxon>eudicotyledons</taxon>
        <taxon>Gunneridae</taxon>
        <taxon>Pentapetalae</taxon>
        <taxon>rosids</taxon>
        <taxon>malvids</taxon>
        <taxon>Sapindales</taxon>
        <taxon>Rutaceae</taxon>
        <taxon>Aurantioideae</taxon>
        <taxon>Citrus</taxon>
    </lineage>
</organism>
<evidence type="ECO:0000255" key="1">
    <source>
        <dbReference type="HAMAP-Rule" id="MF_00432"/>
    </source>
</evidence>
<proteinExistence type="inferred from homology"/>
<geneLocation type="chloroplast"/>
<comment type="function">
    <text evidence="1">Component of the cytochrome b6-f complex, which mediates electron transfer between photosystem II (PSII) and photosystem I (PSI), cyclic electron flow around PSI, and state transitions. PetG is required for either the stability or assembly of the cytochrome b6-f complex.</text>
</comment>
<comment type="subunit">
    <text evidence="1">The 4 large subunits of the cytochrome b6-f complex are cytochrome b6, subunit IV (17 kDa polypeptide, PetD), cytochrome f and the Rieske protein, while the 4 small subunits are PetG, PetL, PetM and PetN. The complex functions as a dimer.</text>
</comment>
<comment type="subcellular location">
    <subcellularLocation>
        <location evidence="1">Plastid</location>
        <location evidence="1">Chloroplast thylakoid membrane</location>
        <topology evidence="1">Single-pass membrane protein</topology>
    </subcellularLocation>
</comment>
<comment type="similarity">
    <text evidence="1">Belongs to the PetG family.</text>
</comment>